<accession>P85269</accession>
<protein>
    <recommendedName>
        <fullName evidence="7">U10-ctenitoxin-Co1a</fullName>
        <shortName evidence="7">U10-CNTX-Co1a</shortName>
    </recommendedName>
    <alternativeName>
        <fullName evidence="6">Neurotoxin Oc FU-5</fullName>
    </alternativeName>
</protein>
<name>TX20B_CTEON</name>
<sequence length="37" mass="4292">ACVPVYKECWYPQKPCCEDRVCQCSFGMTNCKCKARL</sequence>
<feature type="chain" id="PRO_0000302120" description="U10-ctenitoxin-Co1a">
    <location>
        <begin position="1"/>
        <end position="37" status="greater than"/>
    </location>
</feature>
<feature type="disulfide bond" evidence="2">
    <location>
        <begin position="2"/>
        <end position="17"/>
    </location>
</feature>
<feature type="disulfide bond" evidence="2">
    <location>
        <begin position="9"/>
        <end position="22"/>
    </location>
</feature>
<feature type="disulfide bond" evidence="2">
    <location>
        <begin position="16"/>
        <end position="33"/>
    </location>
</feature>
<feature type="disulfide bond" evidence="2">
    <location>
        <begin position="24"/>
        <end position="31"/>
    </location>
</feature>
<feature type="non-terminal residue">
    <location>
        <position position="37"/>
    </location>
</feature>
<dbReference type="SMR" id="P85269"/>
<dbReference type="TCDB" id="8.B.6.1.4">
    <property type="family name" value="the ca(2+) channel-targeting spider toxin (cst) family"/>
</dbReference>
<dbReference type="ArachnoServer" id="AS000321">
    <property type="toxin name" value="U10-ctenitoxin-Co1a"/>
</dbReference>
<dbReference type="GO" id="GO:0005576">
    <property type="term" value="C:extracellular region"/>
    <property type="evidence" value="ECO:0007669"/>
    <property type="project" value="UniProtKB-SubCell"/>
</dbReference>
<dbReference type="GO" id="GO:0005246">
    <property type="term" value="F:calcium channel regulator activity"/>
    <property type="evidence" value="ECO:0007669"/>
    <property type="project" value="UniProtKB-KW"/>
</dbReference>
<dbReference type="GO" id="GO:0008200">
    <property type="term" value="F:ion channel inhibitor activity"/>
    <property type="evidence" value="ECO:0007669"/>
    <property type="project" value="InterPro"/>
</dbReference>
<dbReference type="GO" id="GO:0090729">
    <property type="term" value="F:toxin activity"/>
    <property type="evidence" value="ECO:0007669"/>
    <property type="project" value="UniProtKB-KW"/>
</dbReference>
<dbReference type="CDD" id="cd12960">
    <property type="entry name" value="Spider_toxin"/>
    <property type="match status" value="1"/>
</dbReference>
<dbReference type="Gene3D" id="4.10.40.10">
    <property type="match status" value="1"/>
</dbReference>
<dbReference type="InterPro" id="IPR004169">
    <property type="entry name" value="Spidertoxin"/>
</dbReference>
<dbReference type="Pfam" id="PF02819">
    <property type="entry name" value="Toxin_9"/>
    <property type="match status" value="1"/>
</dbReference>
<dbReference type="SUPFAM" id="SSF57059">
    <property type="entry name" value="omega toxin-like"/>
    <property type="match status" value="1"/>
</dbReference>
<reference evidence="7" key="1">
    <citation type="submission" date="2007-07" db="UniProtKB">
        <authorList>
            <person name="Borges M.H."/>
            <person name="Oliveira C.F.B."/>
            <person name="Goncalves J.M."/>
            <person name="Rates B."/>
            <person name="Santos D.M."/>
            <person name="Pimenta A.M.C."/>
            <person name="Cordeiro M.N."/>
            <person name="Richardson M."/>
        </authorList>
    </citation>
    <scope>PROTEIN SEQUENCE</scope>
    <scope>SUBCELLULAR LOCATION</scope>
    <scope>MASS SPECTROMETRY</scope>
    <source>
        <tissue>Venom</tissue>
    </source>
</reference>
<organism>
    <name type="scientific">Ctenus ornatus</name>
    <name type="common">Brazilian spider</name>
    <name type="synonym">Oligoctenus ornatus</name>
    <dbReference type="NCBI Taxonomy" id="406443"/>
    <lineage>
        <taxon>Eukaryota</taxon>
        <taxon>Metazoa</taxon>
        <taxon>Ecdysozoa</taxon>
        <taxon>Arthropoda</taxon>
        <taxon>Chelicerata</taxon>
        <taxon>Arachnida</taxon>
        <taxon>Araneae</taxon>
        <taxon>Araneomorphae</taxon>
        <taxon>Entelegynae</taxon>
        <taxon>Lycosoidea</taxon>
        <taxon>Ctenidae</taxon>
        <taxon>Oligoctenus</taxon>
    </lineage>
</organism>
<proteinExistence type="evidence at protein level"/>
<comment type="function">
    <text evidence="1">Antagonist of L-type calcium channels (Cav1/CACNA1).</text>
</comment>
<comment type="subcellular location">
    <subcellularLocation>
        <location evidence="5">Secreted</location>
    </subcellularLocation>
</comment>
<comment type="tissue specificity">
    <text evidence="8">Expressed by the venom gland.</text>
</comment>
<comment type="domain">
    <text evidence="3">The presence of a 'disulfide through disulfide knot' structurally defines this protein as a knottin.</text>
</comment>
<comment type="mass spectrometry" mass="4761.0" error="0.26" method="Electrospray" evidence="5"/>
<comment type="similarity">
    <text evidence="4">Belongs to the neurotoxin 02 (plectoxin) family.</text>
</comment>
<evidence type="ECO:0000250" key="1"/>
<evidence type="ECO:0000250" key="2">
    <source>
        <dbReference type="UniProtKB" id="O76201"/>
    </source>
</evidence>
<evidence type="ECO:0000250" key="3">
    <source>
        <dbReference type="UniProtKB" id="P30288"/>
    </source>
</evidence>
<evidence type="ECO:0000255" key="4"/>
<evidence type="ECO:0000269" key="5">
    <source ref="1"/>
</evidence>
<evidence type="ECO:0000303" key="6">
    <source ref="1"/>
</evidence>
<evidence type="ECO:0000305" key="7"/>
<evidence type="ECO:0000305" key="8">
    <source ref="1"/>
</evidence>
<keyword id="KW-0108">Calcium channel impairing toxin</keyword>
<keyword id="KW-0903">Direct protein sequencing</keyword>
<keyword id="KW-1015">Disulfide bond</keyword>
<keyword id="KW-0872">Ion channel impairing toxin</keyword>
<keyword id="KW-0960">Knottin</keyword>
<keyword id="KW-0528">Neurotoxin</keyword>
<keyword id="KW-0964">Secreted</keyword>
<keyword id="KW-0800">Toxin</keyword>
<keyword id="KW-1218">Voltage-gated calcium channel impairing toxin</keyword>